<evidence type="ECO:0000255" key="1"/>
<evidence type="ECO:0000256" key="2">
    <source>
        <dbReference type="SAM" id="MobiDB-lite"/>
    </source>
</evidence>
<evidence type="ECO:0000305" key="3"/>
<dbReference type="EMBL" id="BC038997">
    <property type="protein sequence ID" value="AAH38997.1"/>
    <property type="status" value="ALT_INIT"/>
    <property type="molecule type" value="mRNA"/>
</dbReference>
<dbReference type="EMBL" id="AL354716">
    <property type="status" value="NOT_ANNOTATED_CDS"/>
    <property type="molecule type" value="Genomic_DNA"/>
</dbReference>
<dbReference type="CCDS" id="CCDS43497.1"/>
<dbReference type="RefSeq" id="NP_001078949.1">
    <property type="nucleotide sequence ID" value="NM_001085480.3"/>
</dbReference>
<dbReference type="SMR" id="Q5T6X4"/>
<dbReference type="FunCoup" id="Q5T6X4">
    <property type="interactions" value="5"/>
</dbReference>
<dbReference type="STRING" id="9606.ENSP00000357545"/>
<dbReference type="iPTMnet" id="Q5T6X4"/>
<dbReference type="PhosphoSitePlus" id="Q5T6X4"/>
<dbReference type="BioMuta" id="FAM162B"/>
<dbReference type="DMDM" id="74745291"/>
<dbReference type="MassIVE" id="Q5T6X4"/>
<dbReference type="PaxDb" id="9606-ENSP00000357545"/>
<dbReference type="PeptideAtlas" id="Q5T6X4"/>
<dbReference type="ProteomicsDB" id="64621"/>
<dbReference type="Pumba" id="Q5T6X4"/>
<dbReference type="Antibodypedia" id="51282">
    <property type="antibodies" value="11 antibodies from 6 providers"/>
</dbReference>
<dbReference type="DNASU" id="221303"/>
<dbReference type="Ensembl" id="ENST00000368557.6">
    <property type="protein sequence ID" value="ENSP00000357545.4"/>
    <property type="gene ID" value="ENSG00000183807.8"/>
</dbReference>
<dbReference type="GeneID" id="221303"/>
<dbReference type="KEGG" id="hsa:221303"/>
<dbReference type="MANE-Select" id="ENST00000368557.6">
    <property type="protein sequence ID" value="ENSP00000357545.4"/>
    <property type="RefSeq nucleotide sequence ID" value="NM_001085480.3"/>
    <property type="RefSeq protein sequence ID" value="NP_001078949.1"/>
</dbReference>
<dbReference type="UCSC" id="uc003pxi.2">
    <property type="organism name" value="human"/>
</dbReference>
<dbReference type="AGR" id="HGNC:21549"/>
<dbReference type="CTD" id="221303"/>
<dbReference type="GeneCards" id="FAM162B"/>
<dbReference type="HGNC" id="HGNC:21549">
    <property type="gene designation" value="FAM162B"/>
</dbReference>
<dbReference type="HPA" id="ENSG00000183807">
    <property type="expression patterns" value="Tissue enhanced (placenta)"/>
</dbReference>
<dbReference type="neXtProt" id="NX_Q5T6X4"/>
<dbReference type="OpenTargets" id="ENSG00000183807"/>
<dbReference type="PharmGKB" id="PA162386931"/>
<dbReference type="VEuPathDB" id="HostDB:ENSG00000183807"/>
<dbReference type="eggNOG" id="ENOG502SEVW">
    <property type="taxonomic scope" value="Eukaryota"/>
</dbReference>
<dbReference type="GeneTree" id="ENSGT00640000091497"/>
<dbReference type="HOGENOM" id="CLU_122911_1_0_1"/>
<dbReference type="InParanoid" id="Q5T6X4"/>
<dbReference type="OMA" id="KGRGEVH"/>
<dbReference type="OrthoDB" id="8193498at2759"/>
<dbReference type="PAN-GO" id="Q5T6X4">
    <property type="GO annotations" value="0 GO annotations based on evolutionary models"/>
</dbReference>
<dbReference type="PhylomeDB" id="Q5T6X4"/>
<dbReference type="TreeFam" id="TF323771"/>
<dbReference type="PathwayCommons" id="Q5T6X4"/>
<dbReference type="BioGRID-ORCS" id="221303">
    <property type="hits" value="9 hits in 1143 CRISPR screens"/>
</dbReference>
<dbReference type="ChiTaRS" id="FAM162B">
    <property type="organism name" value="human"/>
</dbReference>
<dbReference type="GenomeRNAi" id="221303"/>
<dbReference type="Pharos" id="Q5T6X4">
    <property type="development level" value="Tdark"/>
</dbReference>
<dbReference type="PRO" id="PR:Q5T6X4"/>
<dbReference type="Proteomes" id="UP000005640">
    <property type="component" value="Chromosome 6"/>
</dbReference>
<dbReference type="RNAct" id="Q5T6X4">
    <property type="molecule type" value="protein"/>
</dbReference>
<dbReference type="Bgee" id="ENSG00000183807">
    <property type="expression patterns" value="Expressed in primordial germ cell in gonad and 145 other cell types or tissues"/>
</dbReference>
<dbReference type="GO" id="GO:0016020">
    <property type="term" value="C:membrane"/>
    <property type="evidence" value="ECO:0007669"/>
    <property type="project" value="UniProtKB-SubCell"/>
</dbReference>
<dbReference type="InterPro" id="IPR009432">
    <property type="entry name" value="DUF1075"/>
</dbReference>
<dbReference type="PANTHER" id="PTHR13674">
    <property type="entry name" value="GROWTH AND TRANSFORMATION-DEPENDENT PROTEIN"/>
    <property type="match status" value="1"/>
</dbReference>
<dbReference type="PANTHER" id="PTHR13674:SF3">
    <property type="entry name" value="PROTEIN FAM162B"/>
    <property type="match status" value="1"/>
</dbReference>
<dbReference type="Pfam" id="PF06388">
    <property type="entry name" value="DUF1075"/>
    <property type="match status" value="1"/>
</dbReference>
<proteinExistence type="evidence at protein level"/>
<comment type="subcellular location">
    <subcellularLocation>
        <location evidence="3">Membrane</location>
        <topology evidence="3">Single-pass membrane protein</topology>
    </subcellularLocation>
</comment>
<comment type="similarity">
    <text evidence="3">Belongs to the UPF0389 family.</text>
</comment>
<comment type="sequence caution" evidence="3">
    <conflict type="erroneous initiation">
        <sequence resource="EMBL-CDS" id="AAH38997"/>
    </conflict>
</comment>
<accession>Q5T6X4</accession>
<accession>Q8IXW8</accession>
<gene>
    <name type="primary">FAM162B</name>
    <name type="synonym">C6orf189</name>
</gene>
<protein>
    <recommendedName>
        <fullName>Protein FAM162B</fullName>
    </recommendedName>
</protein>
<name>F162B_HUMAN</name>
<organism>
    <name type="scientific">Homo sapiens</name>
    <name type="common">Human</name>
    <dbReference type="NCBI Taxonomy" id="9606"/>
    <lineage>
        <taxon>Eukaryota</taxon>
        <taxon>Metazoa</taxon>
        <taxon>Chordata</taxon>
        <taxon>Craniata</taxon>
        <taxon>Vertebrata</taxon>
        <taxon>Euteleostomi</taxon>
        <taxon>Mammalia</taxon>
        <taxon>Eutheria</taxon>
        <taxon>Euarchontoglires</taxon>
        <taxon>Primates</taxon>
        <taxon>Haplorrhini</taxon>
        <taxon>Catarrhini</taxon>
        <taxon>Hominidae</taxon>
        <taxon>Homo</taxon>
    </lineage>
</organism>
<sequence>MLRAVGSLLRLGRGLTVRCGPGAPLEATRRPAPALPPRGLPCYSSGGAPSNSGPQGHGEIHRVPTQRRPSQFDKKILLWTGRFKSMEEIPPRIPPEMIDTARNKARVKACYIMIGLTIIACFAVIVSAKRAVERHESLTSWNLAKKAKWREEAALAAQAKAK</sequence>
<reference key="1">
    <citation type="journal article" date="2003" name="Nature">
        <title>The DNA sequence and analysis of human chromosome 6.</title>
        <authorList>
            <person name="Mungall A.J."/>
            <person name="Palmer S.A."/>
            <person name="Sims S.K."/>
            <person name="Edwards C.A."/>
            <person name="Ashurst J.L."/>
            <person name="Wilming L."/>
            <person name="Jones M.C."/>
            <person name="Horton R."/>
            <person name="Hunt S.E."/>
            <person name="Scott C.E."/>
            <person name="Gilbert J.G.R."/>
            <person name="Clamp M.E."/>
            <person name="Bethel G."/>
            <person name="Milne S."/>
            <person name="Ainscough R."/>
            <person name="Almeida J.P."/>
            <person name="Ambrose K.D."/>
            <person name="Andrews T.D."/>
            <person name="Ashwell R.I.S."/>
            <person name="Babbage A.K."/>
            <person name="Bagguley C.L."/>
            <person name="Bailey J."/>
            <person name="Banerjee R."/>
            <person name="Barker D.J."/>
            <person name="Barlow K.F."/>
            <person name="Bates K."/>
            <person name="Beare D.M."/>
            <person name="Beasley H."/>
            <person name="Beasley O."/>
            <person name="Bird C.P."/>
            <person name="Blakey S.E."/>
            <person name="Bray-Allen S."/>
            <person name="Brook J."/>
            <person name="Brown A.J."/>
            <person name="Brown J.Y."/>
            <person name="Burford D.C."/>
            <person name="Burrill W."/>
            <person name="Burton J."/>
            <person name="Carder C."/>
            <person name="Carter N.P."/>
            <person name="Chapman J.C."/>
            <person name="Clark S.Y."/>
            <person name="Clark G."/>
            <person name="Clee C.M."/>
            <person name="Clegg S."/>
            <person name="Cobley V."/>
            <person name="Collier R.E."/>
            <person name="Collins J.E."/>
            <person name="Colman L.K."/>
            <person name="Corby N.R."/>
            <person name="Coville G.J."/>
            <person name="Culley K.M."/>
            <person name="Dhami P."/>
            <person name="Davies J."/>
            <person name="Dunn M."/>
            <person name="Earthrowl M.E."/>
            <person name="Ellington A.E."/>
            <person name="Evans K.A."/>
            <person name="Faulkner L."/>
            <person name="Francis M.D."/>
            <person name="Frankish A."/>
            <person name="Frankland J."/>
            <person name="French L."/>
            <person name="Garner P."/>
            <person name="Garnett J."/>
            <person name="Ghori M.J."/>
            <person name="Gilby L.M."/>
            <person name="Gillson C.J."/>
            <person name="Glithero R.J."/>
            <person name="Grafham D.V."/>
            <person name="Grant M."/>
            <person name="Gribble S."/>
            <person name="Griffiths C."/>
            <person name="Griffiths M.N.D."/>
            <person name="Hall R."/>
            <person name="Halls K.S."/>
            <person name="Hammond S."/>
            <person name="Harley J.L."/>
            <person name="Hart E.A."/>
            <person name="Heath P.D."/>
            <person name="Heathcott R."/>
            <person name="Holmes S.J."/>
            <person name="Howden P.J."/>
            <person name="Howe K.L."/>
            <person name="Howell G.R."/>
            <person name="Huckle E."/>
            <person name="Humphray S.J."/>
            <person name="Humphries M.D."/>
            <person name="Hunt A.R."/>
            <person name="Johnson C.M."/>
            <person name="Joy A.A."/>
            <person name="Kay M."/>
            <person name="Keenan S.J."/>
            <person name="Kimberley A.M."/>
            <person name="King A."/>
            <person name="Laird G.K."/>
            <person name="Langford C."/>
            <person name="Lawlor S."/>
            <person name="Leongamornlert D.A."/>
            <person name="Leversha M."/>
            <person name="Lloyd C.R."/>
            <person name="Lloyd D.M."/>
            <person name="Loveland J.E."/>
            <person name="Lovell J."/>
            <person name="Martin S."/>
            <person name="Mashreghi-Mohammadi M."/>
            <person name="Maslen G.L."/>
            <person name="Matthews L."/>
            <person name="McCann O.T."/>
            <person name="McLaren S.J."/>
            <person name="McLay K."/>
            <person name="McMurray A."/>
            <person name="Moore M.J.F."/>
            <person name="Mullikin J.C."/>
            <person name="Niblett D."/>
            <person name="Nickerson T."/>
            <person name="Novik K.L."/>
            <person name="Oliver K."/>
            <person name="Overton-Larty E.K."/>
            <person name="Parker A."/>
            <person name="Patel R."/>
            <person name="Pearce A.V."/>
            <person name="Peck A.I."/>
            <person name="Phillimore B.J.C.T."/>
            <person name="Phillips S."/>
            <person name="Plumb R.W."/>
            <person name="Porter K.M."/>
            <person name="Ramsey Y."/>
            <person name="Ranby S.A."/>
            <person name="Rice C.M."/>
            <person name="Ross M.T."/>
            <person name="Searle S.M."/>
            <person name="Sehra H.K."/>
            <person name="Sheridan E."/>
            <person name="Skuce C.D."/>
            <person name="Smith S."/>
            <person name="Smith M."/>
            <person name="Spraggon L."/>
            <person name="Squares S.L."/>
            <person name="Steward C.A."/>
            <person name="Sycamore N."/>
            <person name="Tamlyn-Hall G."/>
            <person name="Tester J."/>
            <person name="Theaker A.J."/>
            <person name="Thomas D.W."/>
            <person name="Thorpe A."/>
            <person name="Tracey A."/>
            <person name="Tromans A."/>
            <person name="Tubby B."/>
            <person name="Wall M."/>
            <person name="Wallis J.M."/>
            <person name="West A.P."/>
            <person name="White S.S."/>
            <person name="Whitehead S.L."/>
            <person name="Whittaker H."/>
            <person name="Wild A."/>
            <person name="Willey D.J."/>
            <person name="Wilmer T.E."/>
            <person name="Wood J.M."/>
            <person name="Wray P.W."/>
            <person name="Wyatt J.C."/>
            <person name="Young L."/>
            <person name="Younger R.M."/>
            <person name="Bentley D.R."/>
            <person name="Coulson A."/>
            <person name="Durbin R.M."/>
            <person name="Hubbard T."/>
            <person name="Sulston J.E."/>
            <person name="Dunham I."/>
            <person name="Rogers J."/>
            <person name="Beck S."/>
        </authorList>
    </citation>
    <scope>NUCLEOTIDE SEQUENCE [LARGE SCALE GENOMIC DNA]</scope>
</reference>
<reference key="2">
    <citation type="journal article" date="2004" name="Genome Res.">
        <title>The status, quality, and expansion of the NIH full-length cDNA project: the Mammalian Gene Collection (MGC).</title>
        <authorList>
            <consortium name="The MGC Project Team"/>
        </authorList>
    </citation>
    <scope>NUCLEOTIDE SEQUENCE [LARGE SCALE MRNA]</scope>
    <source>
        <tissue>Lung</tissue>
    </source>
</reference>
<keyword id="KW-0472">Membrane</keyword>
<keyword id="KW-1267">Proteomics identification</keyword>
<keyword id="KW-1185">Reference proteome</keyword>
<keyword id="KW-0812">Transmembrane</keyword>
<keyword id="KW-1133">Transmembrane helix</keyword>
<feature type="chain" id="PRO_0000254639" description="Protein FAM162B">
    <location>
        <begin position="1"/>
        <end position="162"/>
    </location>
</feature>
<feature type="transmembrane region" description="Helical" evidence="1">
    <location>
        <begin position="107"/>
        <end position="127"/>
    </location>
</feature>
<feature type="region of interest" description="Disordered" evidence="2">
    <location>
        <begin position="26"/>
        <end position="69"/>
    </location>
</feature>
<feature type="sequence variant" id="VAR_053782" description="In dbSNP:rs654128.">
    <original>Q</original>
    <variation>H</variation>
    <location>
        <position position="71"/>
    </location>
</feature>